<accession>Q5XKN4</accession>
<accession>Q9CQ67</accession>
<accession>Q9CX52</accession>
<sequence>MASRAGPRAAGTDGSDFQHRERVAMHYQMSVTLKYEIKKLIYVHLVIWLLLVAKMSVGHLRLLSHDQVAMPYQWEYPYLLSIVPSVLGLLSFPRNNISYLVLSMISMGLFSIAPLIYGSMEMFPAAQQLYRHGKAYRFLFGFSAVSVMYLVLVLAVQVHAWQLYYSKKLLDSWFTSTQEKKRK</sequence>
<name>JAGN1_MOUSE</name>
<proteinExistence type="evidence at protein level"/>
<evidence type="ECO:0000250" key="1">
    <source>
        <dbReference type="UniProtKB" id="Q8N5M9"/>
    </source>
</evidence>
<evidence type="ECO:0000255" key="2"/>
<evidence type="ECO:0000269" key="3">
    <source>
    </source>
</evidence>
<evidence type="ECO:0000305" key="4"/>
<evidence type="ECO:0000312" key="5">
    <source>
        <dbReference type="MGI" id="MGI:1915017"/>
    </source>
</evidence>
<comment type="function">
    <text evidence="3 4">Endoplasmic reticulum transmembrane protein involved in vesicle-mediated transport, which is required for neutrophil function. Required for vesicle-mediated transport; it is however unclear whether it is involved in early secretory pathway or intracellular protein transport. Acts as a regulator of neutrophil function, probably via its role in vesicle-mediated transport: required for defense against fungal pathogens and for granulocyte colony-stimulating factor (GM-CSF) signaling pathway; possibly by regulating glycosylation and/or targeting of proteins contributing to the viability and migration of neutrophils.</text>
</comment>
<comment type="subunit">
    <text evidence="1">Interacts with COPA, COPB2 and COPG2.</text>
</comment>
<comment type="subcellular location">
    <subcellularLocation>
        <location evidence="1">Endoplasmic reticulum membrane</location>
        <topology evidence="2">Multi-pass membrane protein</topology>
    </subcellularLocation>
</comment>
<comment type="disruption phenotype">
    <text evidence="3">Lethality around embryonic day 8.5. Mice carrying a hematopoietic lineage-specific deletion of Jagn1 show defects in neutrophil-dependent immune response to the fungal pathogen Candida albicans. Neutrophils display defects in the glycosylation of proteins involved in cell adhesion and cytotoxicity as well as impaired migration in response to Candida albicans infection and impaired formation of cytotoxic granules.</text>
</comment>
<comment type="similarity">
    <text evidence="4">Belongs to the jagunal family.</text>
</comment>
<comment type="caution">
    <text evidence="3 4">Experiments in human confirm the importance of JAGN1 in neutrophil function with some differences. Defects in JAGN1 cause neutropenia in human, while it is not the case in mice lacking Jagn1. Mutant mice show defects in neutrophil migration and increased susceptibility to fungal infections due to defective killing capacity of neutrophil granulocytes.</text>
</comment>
<comment type="sequence caution" evidence="4">
    <conflict type="frameshift">
        <sequence resource="EMBL-CDS" id="BAB32013"/>
    </conflict>
</comment>
<organism>
    <name type="scientific">Mus musculus</name>
    <name type="common">Mouse</name>
    <dbReference type="NCBI Taxonomy" id="10090"/>
    <lineage>
        <taxon>Eukaryota</taxon>
        <taxon>Metazoa</taxon>
        <taxon>Chordata</taxon>
        <taxon>Craniata</taxon>
        <taxon>Vertebrata</taxon>
        <taxon>Euteleostomi</taxon>
        <taxon>Mammalia</taxon>
        <taxon>Eutheria</taxon>
        <taxon>Euarchontoglires</taxon>
        <taxon>Glires</taxon>
        <taxon>Rodentia</taxon>
        <taxon>Myomorpha</taxon>
        <taxon>Muroidea</taxon>
        <taxon>Muridae</taxon>
        <taxon>Murinae</taxon>
        <taxon>Mus</taxon>
        <taxon>Mus</taxon>
    </lineage>
</organism>
<reference key="1">
    <citation type="journal article" date="2005" name="Science">
        <title>The transcriptional landscape of the mammalian genome.</title>
        <authorList>
            <person name="Carninci P."/>
            <person name="Kasukawa T."/>
            <person name="Katayama S."/>
            <person name="Gough J."/>
            <person name="Frith M.C."/>
            <person name="Maeda N."/>
            <person name="Oyama R."/>
            <person name="Ravasi T."/>
            <person name="Lenhard B."/>
            <person name="Wells C."/>
            <person name="Kodzius R."/>
            <person name="Shimokawa K."/>
            <person name="Bajic V.B."/>
            <person name="Brenner S.E."/>
            <person name="Batalov S."/>
            <person name="Forrest A.R."/>
            <person name="Zavolan M."/>
            <person name="Davis M.J."/>
            <person name="Wilming L.G."/>
            <person name="Aidinis V."/>
            <person name="Allen J.E."/>
            <person name="Ambesi-Impiombato A."/>
            <person name="Apweiler R."/>
            <person name="Aturaliya R.N."/>
            <person name="Bailey T.L."/>
            <person name="Bansal M."/>
            <person name="Baxter L."/>
            <person name="Beisel K.W."/>
            <person name="Bersano T."/>
            <person name="Bono H."/>
            <person name="Chalk A.M."/>
            <person name="Chiu K.P."/>
            <person name="Choudhary V."/>
            <person name="Christoffels A."/>
            <person name="Clutterbuck D.R."/>
            <person name="Crowe M.L."/>
            <person name="Dalla E."/>
            <person name="Dalrymple B.P."/>
            <person name="de Bono B."/>
            <person name="Della Gatta G."/>
            <person name="di Bernardo D."/>
            <person name="Down T."/>
            <person name="Engstrom P."/>
            <person name="Fagiolini M."/>
            <person name="Faulkner G."/>
            <person name="Fletcher C.F."/>
            <person name="Fukushima T."/>
            <person name="Furuno M."/>
            <person name="Futaki S."/>
            <person name="Gariboldi M."/>
            <person name="Georgii-Hemming P."/>
            <person name="Gingeras T.R."/>
            <person name="Gojobori T."/>
            <person name="Green R.E."/>
            <person name="Gustincich S."/>
            <person name="Harbers M."/>
            <person name="Hayashi Y."/>
            <person name="Hensch T.K."/>
            <person name="Hirokawa N."/>
            <person name="Hill D."/>
            <person name="Huminiecki L."/>
            <person name="Iacono M."/>
            <person name="Ikeo K."/>
            <person name="Iwama A."/>
            <person name="Ishikawa T."/>
            <person name="Jakt M."/>
            <person name="Kanapin A."/>
            <person name="Katoh M."/>
            <person name="Kawasawa Y."/>
            <person name="Kelso J."/>
            <person name="Kitamura H."/>
            <person name="Kitano H."/>
            <person name="Kollias G."/>
            <person name="Krishnan S.P."/>
            <person name="Kruger A."/>
            <person name="Kummerfeld S.K."/>
            <person name="Kurochkin I.V."/>
            <person name="Lareau L.F."/>
            <person name="Lazarevic D."/>
            <person name="Lipovich L."/>
            <person name="Liu J."/>
            <person name="Liuni S."/>
            <person name="McWilliam S."/>
            <person name="Madan Babu M."/>
            <person name="Madera M."/>
            <person name="Marchionni L."/>
            <person name="Matsuda H."/>
            <person name="Matsuzawa S."/>
            <person name="Miki H."/>
            <person name="Mignone F."/>
            <person name="Miyake S."/>
            <person name="Morris K."/>
            <person name="Mottagui-Tabar S."/>
            <person name="Mulder N."/>
            <person name="Nakano N."/>
            <person name="Nakauchi H."/>
            <person name="Ng P."/>
            <person name="Nilsson R."/>
            <person name="Nishiguchi S."/>
            <person name="Nishikawa S."/>
            <person name="Nori F."/>
            <person name="Ohara O."/>
            <person name="Okazaki Y."/>
            <person name="Orlando V."/>
            <person name="Pang K.C."/>
            <person name="Pavan W.J."/>
            <person name="Pavesi G."/>
            <person name="Pesole G."/>
            <person name="Petrovsky N."/>
            <person name="Piazza S."/>
            <person name="Reed J."/>
            <person name="Reid J.F."/>
            <person name="Ring B.Z."/>
            <person name="Ringwald M."/>
            <person name="Rost B."/>
            <person name="Ruan Y."/>
            <person name="Salzberg S.L."/>
            <person name="Sandelin A."/>
            <person name="Schneider C."/>
            <person name="Schoenbach C."/>
            <person name="Sekiguchi K."/>
            <person name="Semple C.A."/>
            <person name="Seno S."/>
            <person name="Sessa L."/>
            <person name="Sheng Y."/>
            <person name="Shibata Y."/>
            <person name="Shimada H."/>
            <person name="Shimada K."/>
            <person name="Silva D."/>
            <person name="Sinclair B."/>
            <person name="Sperling S."/>
            <person name="Stupka E."/>
            <person name="Sugiura K."/>
            <person name="Sultana R."/>
            <person name="Takenaka Y."/>
            <person name="Taki K."/>
            <person name="Tammoja K."/>
            <person name="Tan S.L."/>
            <person name="Tang S."/>
            <person name="Taylor M.S."/>
            <person name="Tegner J."/>
            <person name="Teichmann S.A."/>
            <person name="Ueda H.R."/>
            <person name="van Nimwegen E."/>
            <person name="Verardo R."/>
            <person name="Wei C.L."/>
            <person name="Yagi K."/>
            <person name="Yamanishi H."/>
            <person name="Zabarovsky E."/>
            <person name="Zhu S."/>
            <person name="Zimmer A."/>
            <person name="Hide W."/>
            <person name="Bult C."/>
            <person name="Grimmond S.M."/>
            <person name="Teasdale R.D."/>
            <person name="Liu E.T."/>
            <person name="Brusic V."/>
            <person name="Quackenbush J."/>
            <person name="Wahlestedt C."/>
            <person name="Mattick J.S."/>
            <person name="Hume D.A."/>
            <person name="Kai C."/>
            <person name="Sasaki D."/>
            <person name="Tomaru Y."/>
            <person name="Fukuda S."/>
            <person name="Kanamori-Katayama M."/>
            <person name="Suzuki M."/>
            <person name="Aoki J."/>
            <person name="Arakawa T."/>
            <person name="Iida J."/>
            <person name="Imamura K."/>
            <person name="Itoh M."/>
            <person name="Kato T."/>
            <person name="Kawaji H."/>
            <person name="Kawagashira N."/>
            <person name="Kawashima T."/>
            <person name="Kojima M."/>
            <person name="Kondo S."/>
            <person name="Konno H."/>
            <person name="Nakano K."/>
            <person name="Ninomiya N."/>
            <person name="Nishio T."/>
            <person name="Okada M."/>
            <person name="Plessy C."/>
            <person name="Shibata K."/>
            <person name="Shiraki T."/>
            <person name="Suzuki S."/>
            <person name="Tagami M."/>
            <person name="Waki K."/>
            <person name="Watahiki A."/>
            <person name="Okamura-Oho Y."/>
            <person name="Suzuki H."/>
            <person name="Kawai J."/>
            <person name="Hayashizaki Y."/>
        </authorList>
    </citation>
    <scope>NUCLEOTIDE SEQUENCE [LARGE SCALE MRNA]</scope>
    <source>
        <strain>C57BL/6J</strain>
        <tissue>Bone marrow</tissue>
        <tissue>Embryo</tissue>
        <tissue>Spinal cord</tissue>
        <tissue>Thymus</tissue>
        <tissue>Wolffian duct</tissue>
    </source>
</reference>
<reference key="2">
    <citation type="journal article" date="2004" name="Genome Res.">
        <title>The status, quality, and expansion of the NIH full-length cDNA project: the Mammalian Gene Collection (MGC).</title>
        <authorList>
            <consortium name="The MGC Project Team"/>
        </authorList>
    </citation>
    <scope>NUCLEOTIDE SEQUENCE [LARGE SCALE MRNA]</scope>
    <source>
        <strain>FVB/N</strain>
        <tissue>Mammary tumor</tissue>
    </source>
</reference>
<reference key="3">
    <citation type="journal article" date="2010" name="Cell">
        <title>A tissue-specific atlas of mouse protein phosphorylation and expression.</title>
        <authorList>
            <person name="Huttlin E.L."/>
            <person name="Jedrychowski M.P."/>
            <person name="Elias J.E."/>
            <person name="Goswami T."/>
            <person name="Rad R."/>
            <person name="Beausoleil S.A."/>
            <person name="Villen J."/>
            <person name="Haas W."/>
            <person name="Sowa M.E."/>
            <person name="Gygi S.P."/>
        </authorList>
    </citation>
    <scope>IDENTIFICATION BY MASS SPECTROMETRY [LARGE SCALE ANALYSIS]</scope>
    <source>
        <tissue>Brain</tissue>
        <tissue>Brown adipose tissue</tissue>
        <tissue>Kidney</tissue>
        <tissue>Liver</tissue>
        <tissue>Pancreas</tissue>
        <tissue>Spleen</tissue>
        <tissue>Testis</tissue>
    </source>
</reference>
<reference key="4">
    <citation type="journal article" date="2014" name="Nat. Genet.">
        <title>Jagunal homolog 1 is a critical regulator of neutrophil function in fungal host defense.</title>
        <authorList>
            <person name="Wirnsberger G."/>
            <person name="Zwolanek F."/>
            <person name="Stadlmann J."/>
            <person name="Tortola L."/>
            <person name="Liu S.W."/>
            <person name="Perlot T."/>
            <person name="Jaervinen P."/>
            <person name="Duernberger G."/>
            <person name="Kozieradzki I."/>
            <person name="Sarao R."/>
            <person name="De Martino A."/>
            <person name="Boztug K."/>
            <person name="Mechtler K."/>
            <person name="Kuchler K."/>
            <person name="Klein C."/>
            <person name="Elling U."/>
            <person name="Penninger J.M."/>
        </authorList>
    </citation>
    <scope>FUNCTION</scope>
    <scope>DISRUPTION PHENOTYPE</scope>
</reference>
<dbReference type="EMBL" id="AK003673">
    <property type="protein sequence ID" value="BAB22929.1"/>
    <property type="molecule type" value="mRNA"/>
</dbReference>
<dbReference type="EMBL" id="AK017953">
    <property type="protein sequence ID" value="BAB31017.1"/>
    <property type="molecule type" value="mRNA"/>
</dbReference>
<dbReference type="EMBL" id="AK020149">
    <property type="protein sequence ID" value="BAB32013.1"/>
    <property type="status" value="ALT_FRAME"/>
    <property type="molecule type" value="mRNA"/>
</dbReference>
<dbReference type="EMBL" id="AK141417">
    <property type="protein sequence ID" value="BAE24678.1"/>
    <property type="molecule type" value="mRNA"/>
</dbReference>
<dbReference type="EMBL" id="AK151252">
    <property type="protein sequence ID" value="BAE30241.1"/>
    <property type="molecule type" value="mRNA"/>
</dbReference>
<dbReference type="EMBL" id="BC011296">
    <property type="protein sequence ID" value="AAH11296.1"/>
    <property type="molecule type" value="mRNA"/>
</dbReference>
<dbReference type="EMBL" id="BC025910">
    <property type="protein sequence ID" value="AAH25910.1"/>
    <property type="molecule type" value="mRNA"/>
</dbReference>
<dbReference type="EMBL" id="BC037019">
    <property type="protein sequence ID" value="AAH37019.1"/>
    <property type="molecule type" value="mRNA"/>
</dbReference>
<dbReference type="CCDS" id="CCDS20419.1"/>
<dbReference type="RefSeq" id="NP_001230668.1">
    <property type="nucleotide sequence ID" value="NM_001243739.1"/>
</dbReference>
<dbReference type="RefSeq" id="NP_080641.1">
    <property type="nucleotide sequence ID" value="NM_026365.3"/>
</dbReference>
<dbReference type="SMR" id="Q5XKN4"/>
<dbReference type="BioGRID" id="212427">
    <property type="interactions" value="2"/>
</dbReference>
<dbReference type="FunCoup" id="Q5XKN4">
    <property type="interactions" value="1919"/>
</dbReference>
<dbReference type="STRING" id="10090.ENSMUSP00000098631"/>
<dbReference type="iPTMnet" id="Q5XKN4"/>
<dbReference type="PhosphoSitePlus" id="Q5XKN4"/>
<dbReference type="jPOST" id="Q5XKN4"/>
<dbReference type="PaxDb" id="10090-ENSMUSP00000098631"/>
<dbReference type="PeptideAtlas" id="Q5XKN4"/>
<dbReference type="ProteomicsDB" id="269114"/>
<dbReference type="Pumba" id="Q5XKN4"/>
<dbReference type="TopDownProteomics" id="Q5XKN4"/>
<dbReference type="Antibodypedia" id="59146">
    <property type="antibodies" value="56 antibodies from 15 providers"/>
</dbReference>
<dbReference type="DNASU" id="67767"/>
<dbReference type="Ensembl" id="ENSMUST00000101070.5">
    <property type="protein sequence ID" value="ENSMUSP00000098631.5"/>
    <property type="gene ID" value="ENSMUSG00000051256.11"/>
</dbReference>
<dbReference type="GeneID" id="67767"/>
<dbReference type="KEGG" id="mmu:67767"/>
<dbReference type="UCSC" id="uc009dgf.2">
    <property type="organism name" value="mouse"/>
</dbReference>
<dbReference type="AGR" id="MGI:1915017"/>
<dbReference type="CTD" id="84522"/>
<dbReference type="MGI" id="MGI:1915017">
    <property type="gene designation" value="Jagn1"/>
</dbReference>
<dbReference type="VEuPathDB" id="HostDB:ENSMUSG00000051256"/>
<dbReference type="eggNOG" id="KOG4054">
    <property type="taxonomic scope" value="Eukaryota"/>
</dbReference>
<dbReference type="GeneTree" id="ENSGT00390000005596"/>
<dbReference type="HOGENOM" id="CLU_121621_0_0_1"/>
<dbReference type="InParanoid" id="Q5XKN4"/>
<dbReference type="OMA" id="PYGVLWY"/>
<dbReference type="OrthoDB" id="8914197at2759"/>
<dbReference type="PhylomeDB" id="Q5XKN4"/>
<dbReference type="TreeFam" id="TF313137"/>
<dbReference type="BioGRID-ORCS" id="67767">
    <property type="hits" value="4 hits in 76 CRISPR screens"/>
</dbReference>
<dbReference type="ChiTaRS" id="Jagn1">
    <property type="organism name" value="mouse"/>
</dbReference>
<dbReference type="PRO" id="PR:Q5XKN4"/>
<dbReference type="Proteomes" id="UP000000589">
    <property type="component" value="Chromosome 6"/>
</dbReference>
<dbReference type="RNAct" id="Q5XKN4">
    <property type="molecule type" value="protein"/>
</dbReference>
<dbReference type="Bgee" id="ENSMUSG00000051256">
    <property type="expression patterns" value="Expressed in right kidney and 263 other cell types or tissues"/>
</dbReference>
<dbReference type="ExpressionAtlas" id="Q5XKN4">
    <property type="expression patterns" value="baseline and differential"/>
</dbReference>
<dbReference type="GO" id="GO:0005783">
    <property type="term" value="C:endoplasmic reticulum"/>
    <property type="evidence" value="ECO:0000250"/>
    <property type="project" value="UniProtKB"/>
</dbReference>
<dbReference type="GO" id="GO:0005789">
    <property type="term" value="C:endoplasmic reticulum membrane"/>
    <property type="evidence" value="ECO:0007669"/>
    <property type="project" value="UniProtKB-SubCell"/>
</dbReference>
<dbReference type="GO" id="GO:0050832">
    <property type="term" value="P:defense response to fungus"/>
    <property type="evidence" value="ECO:0000315"/>
    <property type="project" value="UniProtKB"/>
</dbReference>
<dbReference type="GO" id="GO:0007029">
    <property type="term" value="P:endoplasmic reticulum organization"/>
    <property type="evidence" value="ECO:0007669"/>
    <property type="project" value="InterPro"/>
</dbReference>
<dbReference type="GO" id="GO:0038158">
    <property type="term" value="P:granulocyte colony-stimulating factor signaling pathway"/>
    <property type="evidence" value="ECO:0000315"/>
    <property type="project" value="UniProtKB"/>
</dbReference>
<dbReference type="GO" id="GO:1901142">
    <property type="term" value="P:insulin metabolic process"/>
    <property type="evidence" value="ECO:0000314"/>
    <property type="project" value="MGI"/>
</dbReference>
<dbReference type="GO" id="GO:0030073">
    <property type="term" value="P:insulin secretion"/>
    <property type="evidence" value="ECO:0000315"/>
    <property type="project" value="MGI"/>
</dbReference>
<dbReference type="GO" id="GO:0061179">
    <property type="term" value="P:negative regulation of insulin secretion involved in cellular response to glucose stimulus"/>
    <property type="evidence" value="ECO:0007669"/>
    <property type="project" value="Ensembl"/>
</dbReference>
<dbReference type="GO" id="GO:0002446">
    <property type="term" value="P:neutrophil mediated immunity"/>
    <property type="evidence" value="ECO:0000315"/>
    <property type="project" value="UniProtKB"/>
</dbReference>
<dbReference type="GO" id="GO:1990266">
    <property type="term" value="P:neutrophil migration"/>
    <property type="evidence" value="ECO:0000315"/>
    <property type="project" value="UniProtKB"/>
</dbReference>
<dbReference type="GO" id="GO:0034976">
    <property type="term" value="P:response to endoplasmic reticulum stress"/>
    <property type="evidence" value="ECO:0000314"/>
    <property type="project" value="MGI"/>
</dbReference>
<dbReference type="GO" id="GO:0009749">
    <property type="term" value="P:response to glucose"/>
    <property type="evidence" value="ECO:0000315"/>
    <property type="project" value="MGI"/>
</dbReference>
<dbReference type="GO" id="GO:0016192">
    <property type="term" value="P:vesicle-mediated transport"/>
    <property type="evidence" value="ECO:0007669"/>
    <property type="project" value="Ensembl"/>
</dbReference>
<dbReference type="InterPro" id="IPR009787">
    <property type="entry name" value="Jagunal"/>
</dbReference>
<dbReference type="PANTHER" id="PTHR20955">
    <property type="entry name" value="PROTEIN JAGUNAL HOMOLOG 1"/>
    <property type="match status" value="1"/>
</dbReference>
<dbReference type="PANTHER" id="PTHR20955:SF1">
    <property type="entry name" value="PROTEIN JAGUNAL HOMOLOG 1"/>
    <property type="match status" value="1"/>
</dbReference>
<dbReference type="Pfam" id="PF07086">
    <property type="entry name" value="Jagunal"/>
    <property type="match status" value="1"/>
</dbReference>
<keyword id="KW-0256">Endoplasmic reticulum</keyword>
<keyword id="KW-0391">Immunity</keyword>
<keyword id="KW-0472">Membrane</keyword>
<keyword id="KW-0597">Phosphoprotein</keyword>
<keyword id="KW-0653">Protein transport</keyword>
<keyword id="KW-1185">Reference proteome</keyword>
<keyword id="KW-0812">Transmembrane</keyword>
<keyword id="KW-1133">Transmembrane helix</keyword>
<keyword id="KW-0813">Transport</keyword>
<feature type="chain" id="PRO_0000313609" description="Protein jagunal homolog 1">
    <location>
        <begin position="1"/>
        <end position="183"/>
    </location>
</feature>
<feature type="topological domain" description="Cytoplasmic" evidence="2">
    <location>
        <begin position="1"/>
        <end position="39"/>
    </location>
</feature>
<feature type="transmembrane region" description="Helical" evidence="2">
    <location>
        <begin position="40"/>
        <end position="60"/>
    </location>
</feature>
<feature type="topological domain" description="Lumenal" evidence="2">
    <location>
        <begin position="61"/>
        <end position="71"/>
    </location>
</feature>
<feature type="transmembrane region" description="Helical" evidence="2">
    <location>
        <begin position="72"/>
        <end position="92"/>
    </location>
</feature>
<feature type="topological domain" description="Cytoplasmic" evidence="2">
    <location>
        <begin position="93"/>
        <end position="96"/>
    </location>
</feature>
<feature type="transmembrane region" description="Helical" evidence="2">
    <location>
        <begin position="97"/>
        <end position="117"/>
    </location>
</feature>
<feature type="topological domain" description="Lumenal" evidence="2">
    <location>
        <begin position="118"/>
        <end position="137"/>
    </location>
</feature>
<feature type="transmembrane region" description="Helical" evidence="2">
    <location>
        <begin position="138"/>
        <end position="158"/>
    </location>
</feature>
<feature type="topological domain" description="Cytoplasmic" evidence="2">
    <location>
        <begin position="159"/>
        <end position="183"/>
    </location>
</feature>
<feature type="modified residue" description="Phosphoserine" evidence="1">
    <location>
        <position position="3"/>
    </location>
</feature>
<feature type="sequence conflict" description="In Ref. 1; BAB32013." evidence="4" ref="1">
    <original>G</original>
    <variation>S</variation>
    <location>
        <position position="6"/>
    </location>
</feature>
<feature type="sequence conflict" description="In Ref. 1; BAB32013." evidence="4" ref="1">
    <original>S</original>
    <variation>Y</variation>
    <location>
        <position position="91"/>
    </location>
</feature>
<feature type="sequence conflict" description="In Ref. 1; BAB32013." evidence="4" ref="1">
    <original>A</original>
    <variation>D</variation>
    <location>
        <position position="113"/>
    </location>
</feature>
<feature type="sequence conflict" description="In Ref. 2; AAH11296." evidence="4" ref="2">
    <original>M</original>
    <variation>L</variation>
    <location>
        <position position="120"/>
    </location>
</feature>
<protein>
    <recommendedName>
        <fullName evidence="4">Protein jagunal homolog 1</fullName>
    </recommendedName>
</protein>
<gene>
    <name evidence="5" type="primary">Jagn1</name>
</gene>